<evidence type="ECO:0000255" key="1">
    <source>
        <dbReference type="HAMAP-Rule" id="MF_01220"/>
    </source>
</evidence>
<keyword id="KW-0067">ATP-binding</keyword>
<keyword id="KW-0963">Cytoplasm</keyword>
<keyword id="KW-0418">Kinase</keyword>
<keyword id="KW-0547">Nucleotide-binding</keyword>
<keyword id="KW-0665">Pyrimidine biosynthesis</keyword>
<keyword id="KW-1185">Reference proteome</keyword>
<keyword id="KW-0808">Transferase</keyword>
<gene>
    <name evidence="1" type="primary">pyrH</name>
    <name type="ordered locus">BCc_144</name>
</gene>
<accession>Q057S9</accession>
<comment type="function">
    <text evidence="1">Catalyzes the reversible phosphorylation of UMP to UDP.</text>
</comment>
<comment type="catalytic activity">
    <reaction evidence="1">
        <text>UMP + ATP = UDP + ADP</text>
        <dbReference type="Rhea" id="RHEA:24400"/>
        <dbReference type="ChEBI" id="CHEBI:30616"/>
        <dbReference type="ChEBI" id="CHEBI:57865"/>
        <dbReference type="ChEBI" id="CHEBI:58223"/>
        <dbReference type="ChEBI" id="CHEBI:456216"/>
        <dbReference type="EC" id="2.7.4.22"/>
    </reaction>
</comment>
<comment type="activity regulation">
    <text evidence="1">Inhibited by UTP.</text>
</comment>
<comment type="pathway">
    <text evidence="1">Pyrimidine metabolism; CTP biosynthesis via de novo pathway; UDP from UMP (UMPK route): step 1/1.</text>
</comment>
<comment type="subunit">
    <text evidence="1">Homohexamer.</text>
</comment>
<comment type="subcellular location">
    <subcellularLocation>
        <location evidence="1">Cytoplasm</location>
    </subcellularLocation>
</comment>
<comment type="similarity">
    <text evidence="1">Belongs to the UMP kinase family.</text>
</comment>
<name>PYRH_BUCCC</name>
<dbReference type="EC" id="2.7.4.22" evidence="1"/>
<dbReference type="EMBL" id="CP000263">
    <property type="protein sequence ID" value="ABJ90620.1"/>
    <property type="molecule type" value="Genomic_DNA"/>
</dbReference>
<dbReference type="RefSeq" id="WP_011672539.1">
    <property type="nucleotide sequence ID" value="NC_008513.1"/>
</dbReference>
<dbReference type="SMR" id="Q057S9"/>
<dbReference type="STRING" id="372461.BCc_144"/>
<dbReference type="KEGG" id="bcc:BCc_144"/>
<dbReference type="eggNOG" id="COG0528">
    <property type="taxonomic scope" value="Bacteria"/>
</dbReference>
<dbReference type="HOGENOM" id="CLU_033861_0_0_6"/>
<dbReference type="OrthoDB" id="9807458at2"/>
<dbReference type="UniPathway" id="UPA00159">
    <property type="reaction ID" value="UER00275"/>
</dbReference>
<dbReference type="Proteomes" id="UP000000669">
    <property type="component" value="Chromosome"/>
</dbReference>
<dbReference type="GO" id="GO:0005829">
    <property type="term" value="C:cytosol"/>
    <property type="evidence" value="ECO:0007669"/>
    <property type="project" value="TreeGrafter"/>
</dbReference>
<dbReference type="GO" id="GO:0005524">
    <property type="term" value="F:ATP binding"/>
    <property type="evidence" value="ECO:0007669"/>
    <property type="project" value="UniProtKB-KW"/>
</dbReference>
<dbReference type="GO" id="GO:0033862">
    <property type="term" value="F:UMP kinase activity"/>
    <property type="evidence" value="ECO:0007669"/>
    <property type="project" value="UniProtKB-EC"/>
</dbReference>
<dbReference type="GO" id="GO:0044210">
    <property type="term" value="P:'de novo' CTP biosynthetic process"/>
    <property type="evidence" value="ECO:0007669"/>
    <property type="project" value="UniProtKB-UniRule"/>
</dbReference>
<dbReference type="GO" id="GO:0006225">
    <property type="term" value="P:UDP biosynthetic process"/>
    <property type="evidence" value="ECO:0007669"/>
    <property type="project" value="TreeGrafter"/>
</dbReference>
<dbReference type="CDD" id="cd04254">
    <property type="entry name" value="AAK_UMPK-PyrH-Ec"/>
    <property type="match status" value="1"/>
</dbReference>
<dbReference type="FunFam" id="3.40.1160.10:FF:000001">
    <property type="entry name" value="Uridylate kinase"/>
    <property type="match status" value="1"/>
</dbReference>
<dbReference type="Gene3D" id="3.40.1160.10">
    <property type="entry name" value="Acetylglutamate kinase-like"/>
    <property type="match status" value="1"/>
</dbReference>
<dbReference type="HAMAP" id="MF_01220_B">
    <property type="entry name" value="PyrH_B"/>
    <property type="match status" value="1"/>
</dbReference>
<dbReference type="InterPro" id="IPR036393">
    <property type="entry name" value="AceGlu_kinase-like_sf"/>
</dbReference>
<dbReference type="InterPro" id="IPR001048">
    <property type="entry name" value="Asp/Glu/Uridylate_kinase"/>
</dbReference>
<dbReference type="InterPro" id="IPR011817">
    <property type="entry name" value="Uridylate_kinase"/>
</dbReference>
<dbReference type="InterPro" id="IPR015963">
    <property type="entry name" value="Uridylate_kinase_bac"/>
</dbReference>
<dbReference type="NCBIfam" id="TIGR02075">
    <property type="entry name" value="pyrH_bact"/>
    <property type="match status" value="1"/>
</dbReference>
<dbReference type="PANTHER" id="PTHR42833">
    <property type="entry name" value="URIDYLATE KINASE"/>
    <property type="match status" value="1"/>
</dbReference>
<dbReference type="PANTHER" id="PTHR42833:SF4">
    <property type="entry name" value="URIDYLATE KINASE PUMPKIN, CHLOROPLASTIC"/>
    <property type="match status" value="1"/>
</dbReference>
<dbReference type="Pfam" id="PF00696">
    <property type="entry name" value="AA_kinase"/>
    <property type="match status" value="1"/>
</dbReference>
<dbReference type="PIRSF" id="PIRSF005650">
    <property type="entry name" value="Uridylate_kin"/>
    <property type="match status" value="1"/>
</dbReference>
<dbReference type="SUPFAM" id="SSF53633">
    <property type="entry name" value="Carbamate kinase-like"/>
    <property type="match status" value="1"/>
</dbReference>
<reference key="1">
    <citation type="journal article" date="2006" name="Science">
        <title>A small microbial genome: the end of a long symbiotic relationship?</title>
        <authorList>
            <person name="Perez-Brocal V."/>
            <person name="Gil R."/>
            <person name="Ramos S."/>
            <person name="Lamelas A."/>
            <person name="Postigo M."/>
            <person name="Michelena J.M."/>
            <person name="Silva F.J."/>
            <person name="Moya A."/>
            <person name="Latorre A."/>
        </authorList>
    </citation>
    <scope>NUCLEOTIDE SEQUENCE [LARGE SCALE GENOMIC DNA]</scope>
    <source>
        <strain>Cc</strain>
    </source>
</reference>
<protein>
    <recommendedName>
        <fullName evidence="1">Uridylate kinase</fullName>
        <shortName evidence="1">UK</shortName>
        <ecNumber evidence="1">2.7.4.22</ecNumber>
    </recommendedName>
    <alternativeName>
        <fullName evidence="1">Uridine monophosphate kinase</fullName>
        <shortName evidence="1">UMP kinase</shortName>
        <shortName evidence="1">UMPK</shortName>
    </alternativeName>
</protein>
<proteinExistence type="inferred from homology"/>
<organism>
    <name type="scientific">Buchnera aphidicola subsp. Cinara cedri (strain Cc)</name>
    <dbReference type="NCBI Taxonomy" id="372461"/>
    <lineage>
        <taxon>Bacteria</taxon>
        <taxon>Pseudomonadati</taxon>
        <taxon>Pseudomonadota</taxon>
        <taxon>Gammaproteobacteria</taxon>
        <taxon>Enterobacterales</taxon>
        <taxon>Erwiniaceae</taxon>
        <taxon>Buchnera</taxon>
    </lineage>
</organism>
<feature type="chain" id="PRO_0000323804" description="Uridylate kinase">
    <location>
        <begin position="1"/>
        <end position="239"/>
    </location>
</feature>
<feature type="binding site" evidence="1">
    <location>
        <begin position="13"/>
        <end position="16"/>
    </location>
    <ligand>
        <name>ATP</name>
        <dbReference type="ChEBI" id="CHEBI:30616"/>
    </ligand>
</feature>
<feature type="binding site" evidence="1">
    <location>
        <position position="55"/>
    </location>
    <ligand>
        <name>UMP</name>
        <dbReference type="ChEBI" id="CHEBI:57865"/>
    </ligand>
</feature>
<feature type="binding site" evidence="1">
    <location>
        <position position="56"/>
    </location>
    <ligand>
        <name>ATP</name>
        <dbReference type="ChEBI" id="CHEBI:30616"/>
    </ligand>
</feature>
<feature type="binding site" evidence="1">
    <location>
        <position position="60"/>
    </location>
    <ligand>
        <name>ATP</name>
        <dbReference type="ChEBI" id="CHEBI:30616"/>
    </ligand>
</feature>
<feature type="binding site" evidence="1">
    <location>
        <position position="75"/>
    </location>
    <ligand>
        <name>UMP</name>
        <dbReference type="ChEBI" id="CHEBI:57865"/>
    </ligand>
</feature>
<feature type="binding site" evidence="1">
    <location>
        <begin position="136"/>
        <end position="143"/>
    </location>
    <ligand>
        <name>UMP</name>
        <dbReference type="ChEBI" id="CHEBI:57865"/>
    </ligand>
</feature>
<feature type="binding site" evidence="1">
    <location>
        <position position="163"/>
    </location>
    <ligand>
        <name>ATP</name>
        <dbReference type="ChEBI" id="CHEBI:30616"/>
    </ligand>
</feature>
<feature type="binding site" evidence="1">
    <location>
        <position position="169"/>
    </location>
    <ligand>
        <name>ATP</name>
        <dbReference type="ChEBI" id="CHEBI:30616"/>
    </ligand>
</feature>
<feature type="binding site" evidence="1">
    <location>
        <position position="172"/>
    </location>
    <ligand>
        <name>ATP</name>
        <dbReference type="ChEBI" id="CHEBI:30616"/>
    </ligand>
</feature>
<sequence length="239" mass="26951">MKKKIKYNRILLKISGEFLSSKKTFNINTIFITKLIKQIKLLTNLGVQIGLVIGGGNLFRGSDLEKIGMRRSISDKIGMLSTVMNGLLLHEFMQTANIKSKIFSSTLLEGICERYHIDKAIKCLEKKSVAIFCFGLGIPFFTTDSAACIYGTEIKANILLKATKVDGVYSSDPILNKSAILYKNLSYKDILRKELKVMDYTSLILAYENKLPILVFNMYDPEILYKIIIEKSNIGTLIK</sequence>